<comment type="function">
    <text evidence="1">Catalyzes the synthesis of 5,6-dihydrouridine (D), a modified base found in the D-loop of most tRNAs, via the reduction of the C5-C6 double bond in target uridines. Specifically modifies U20 and U20a in tRNAs.</text>
</comment>
<comment type="catalytic activity">
    <reaction evidence="1">
        <text>5,6-dihydrouridine(20) in tRNA + NADP(+) = uridine(20) in tRNA + NADPH + H(+)</text>
        <dbReference type="Rhea" id="RHEA:53336"/>
        <dbReference type="Rhea" id="RHEA-COMP:13533"/>
        <dbReference type="Rhea" id="RHEA-COMP:13534"/>
        <dbReference type="ChEBI" id="CHEBI:15378"/>
        <dbReference type="ChEBI" id="CHEBI:57783"/>
        <dbReference type="ChEBI" id="CHEBI:58349"/>
        <dbReference type="ChEBI" id="CHEBI:65315"/>
        <dbReference type="ChEBI" id="CHEBI:74443"/>
        <dbReference type="EC" id="1.3.1.91"/>
    </reaction>
</comment>
<comment type="catalytic activity">
    <reaction evidence="1">
        <text>5,6-dihydrouridine(20) in tRNA + NAD(+) = uridine(20) in tRNA + NADH + H(+)</text>
        <dbReference type="Rhea" id="RHEA:53340"/>
        <dbReference type="Rhea" id="RHEA-COMP:13533"/>
        <dbReference type="Rhea" id="RHEA-COMP:13534"/>
        <dbReference type="ChEBI" id="CHEBI:15378"/>
        <dbReference type="ChEBI" id="CHEBI:57540"/>
        <dbReference type="ChEBI" id="CHEBI:57945"/>
        <dbReference type="ChEBI" id="CHEBI:65315"/>
        <dbReference type="ChEBI" id="CHEBI:74443"/>
        <dbReference type="EC" id="1.3.1.91"/>
    </reaction>
</comment>
<comment type="catalytic activity">
    <reaction evidence="1">
        <text>5,6-dihydrouridine(20a) in tRNA + NADP(+) = uridine(20a) in tRNA + NADPH + H(+)</text>
        <dbReference type="Rhea" id="RHEA:53344"/>
        <dbReference type="Rhea" id="RHEA-COMP:13535"/>
        <dbReference type="Rhea" id="RHEA-COMP:13536"/>
        <dbReference type="ChEBI" id="CHEBI:15378"/>
        <dbReference type="ChEBI" id="CHEBI:57783"/>
        <dbReference type="ChEBI" id="CHEBI:58349"/>
        <dbReference type="ChEBI" id="CHEBI:65315"/>
        <dbReference type="ChEBI" id="CHEBI:74443"/>
    </reaction>
</comment>
<comment type="catalytic activity">
    <reaction evidence="1">
        <text>5,6-dihydrouridine(20a) in tRNA + NAD(+) = uridine(20a) in tRNA + NADH + H(+)</text>
        <dbReference type="Rhea" id="RHEA:53348"/>
        <dbReference type="Rhea" id="RHEA-COMP:13535"/>
        <dbReference type="Rhea" id="RHEA-COMP:13536"/>
        <dbReference type="ChEBI" id="CHEBI:15378"/>
        <dbReference type="ChEBI" id="CHEBI:57540"/>
        <dbReference type="ChEBI" id="CHEBI:57945"/>
        <dbReference type="ChEBI" id="CHEBI:65315"/>
        <dbReference type="ChEBI" id="CHEBI:74443"/>
    </reaction>
</comment>
<comment type="cofactor">
    <cofactor evidence="1">
        <name>FMN</name>
        <dbReference type="ChEBI" id="CHEBI:58210"/>
    </cofactor>
</comment>
<comment type="similarity">
    <text evidence="1">Belongs to the Dus family. DusA subfamily.</text>
</comment>
<sequence length="323" mass="36722">MHNKFYRGRFAVAPMLDWTTRHCRYFHRQFSQQALLYTEMITAPAILHAKYDLLEYDPAEQPVALQLGGSDPTQLANCAKLVQARGYTEINLNVGCPSDRVQNGMFGACLMANADLVADCIKAMQDVVDIPVTIKHRIGIDTLDSYAFLCDFIDKIQPYSQDFIVHARKAWLSGLSPKENREIPPLDYERVYQLKRDFPQLNISINGGIKTIDEIKQHLTKVDGVMVGREAYQNPALLGEIDQQLFDQNQPLITARIAVENMLPYIEQQLSKGVYLNHIVRHMLGAFQNCKGARQWRRHLSENACKQGAGIEVVEQALRFVTE</sequence>
<proteinExistence type="inferred from homology"/>
<accession>Q7VNV2</accession>
<dbReference type="EC" id="1.3.1.-" evidence="1"/>
<dbReference type="EC" id="1.3.1.91" evidence="1"/>
<dbReference type="EMBL" id="AE017143">
    <property type="protein sequence ID" value="AAP95346.1"/>
    <property type="molecule type" value="Genomic_DNA"/>
</dbReference>
<dbReference type="RefSeq" id="WP_010944399.1">
    <property type="nucleotide sequence ID" value="NC_002940.2"/>
</dbReference>
<dbReference type="SMR" id="Q7VNV2"/>
<dbReference type="STRING" id="233412.HD_0376"/>
<dbReference type="DNASU" id="1490375"/>
<dbReference type="KEGG" id="hdu:HD_0376"/>
<dbReference type="eggNOG" id="COG0042">
    <property type="taxonomic scope" value="Bacteria"/>
</dbReference>
<dbReference type="HOGENOM" id="CLU_013299_2_1_6"/>
<dbReference type="OrthoDB" id="9783413at2"/>
<dbReference type="Proteomes" id="UP000001022">
    <property type="component" value="Chromosome"/>
</dbReference>
<dbReference type="GO" id="GO:0050660">
    <property type="term" value="F:flavin adenine dinucleotide binding"/>
    <property type="evidence" value="ECO:0007669"/>
    <property type="project" value="InterPro"/>
</dbReference>
<dbReference type="GO" id="GO:0010181">
    <property type="term" value="F:FMN binding"/>
    <property type="evidence" value="ECO:0007669"/>
    <property type="project" value="UniProtKB-UniRule"/>
</dbReference>
<dbReference type="GO" id="GO:0000049">
    <property type="term" value="F:tRNA binding"/>
    <property type="evidence" value="ECO:0007669"/>
    <property type="project" value="UniProtKB-UniRule"/>
</dbReference>
<dbReference type="GO" id="GO:0102264">
    <property type="term" value="F:tRNA-dihydrouridine20 synthase activity"/>
    <property type="evidence" value="ECO:0007669"/>
    <property type="project" value="UniProtKB-EC"/>
</dbReference>
<dbReference type="GO" id="GO:0102266">
    <property type="term" value="F:tRNA-dihydrouridine20a synthase activity"/>
    <property type="evidence" value="ECO:0007669"/>
    <property type="project" value="RHEA"/>
</dbReference>
<dbReference type="CDD" id="cd02801">
    <property type="entry name" value="DUS_like_FMN"/>
    <property type="match status" value="1"/>
</dbReference>
<dbReference type="FunFam" id="3.20.20.70:FF:000083">
    <property type="entry name" value="tRNA-dihydrouridine(20/20a) synthase"/>
    <property type="match status" value="1"/>
</dbReference>
<dbReference type="Gene3D" id="1.20.120.1460">
    <property type="match status" value="1"/>
</dbReference>
<dbReference type="Gene3D" id="3.20.20.70">
    <property type="entry name" value="Aldolase class I"/>
    <property type="match status" value="1"/>
</dbReference>
<dbReference type="HAMAP" id="MF_02041">
    <property type="entry name" value="DusA_subfam"/>
    <property type="match status" value="1"/>
</dbReference>
<dbReference type="InterPro" id="IPR013785">
    <property type="entry name" value="Aldolase_TIM"/>
</dbReference>
<dbReference type="InterPro" id="IPR035587">
    <property type="entry name" value="DUS-like_FMN-bd"/>
</dbReference>
<dbReference type="InterPro" id="IPR001269">
    <property type="entry name" value="DUS_fam"/>
</dbReference>
<dbReference type="InterPro" id="IPR004653">
    <property type="entry name" value="DusA"/>
</dbReference>
<dbReference type="InterPro" id="IPR018517">
    <property type="entry name" value="tRNA_hU_synthase_CS"/>
</dbReference>
<dbReference type="NCBIfam" id="NF008774">
    <property type="entry name" value="PRK11815.1"/>
    <property type="match status" value="1"/>
</dbReference>
<dbReference type="NCBIfam" id="TIGR00742">
    <property type="entry name" value="yjbN"/>
    <property type="match status" value="1"/>
</dbReference>
<dbReference type="PANTHER" id="PTHR42907">
    <property type="entry name" value="FMN-LINKED OXIDOREDUCTASES SUPERFAMILY PROTEIN"/>
    <property type="match status" value="1"/>
</dbReference>
<dbReference type="PANTHER" id="PTHR42907:SF1">
    <property type="entry name" value="FMN-LINKED OXIDOREDUCTASES SUPERFAMILY PROTEIN"/>
    <property type="match status" value="1"/>
</dbReference>
<dbReference type="Pfam" id="PF01207">
    <property type="entry name" value="Dus"/>
    <property type="match status" value="1"/>
</dbReference>
<dbReference type="PIRSF" id="PIRSF006621">
    <property type="entry name" value="Dus"/>
    <property type="match status" value="1"/>
</dbReference>
<dbReference type="SUPFAM" id="SSF51395">
    <property type="entry name" value="FMN-linked oxidoreductases"/>
    <property type="match status" value="1"/>
</dbReference>
<dbReference type="PROSITE" id="PS01136">
    <property type="entry name" value="UPF0034"/>
    <property type="match status" value="1"/>
</dbReference>
<name>DUSA_HAEDU</name>
<evidence type="ECO:0000255" key="1">
    <source>
        <dbReference type="HAMAP-Rule" id="MF_02041"/>
    </source>
</evidence>
<gene>
    <name evidence="1" type="primary">dusA</name>
    <name type="ordered locus">HD_0376</name>
</gene>
<organism>
    <name type="scientific">Haemophilus ducreyi (strain 35000HP / ATCC 700724)</name>
    <dbReference type="NCBI Taxonomy" id="233412"/>
    <lineage>
        <taxon>Bacteria</taxon>
        <taxon>Pseudomonadati</taxon>
        <taxon>Pseudomonadota</taxon>
        <taxon>Gammaproteobacteria</taxon>
        <taxon>Pasteurellales</taxon>
        <taxon>Pasteurellaceae</taxon>
        <taxon>Haemophilus</taxon>
    </lineage>
</organism>
<reference key="1">
    <citation type="submission" date="2003-06" db="EMBL/GenBank/DDBJ databases">
        <title>The complete genome sequence of Haemophilus ducreyi.</title>
        <authorList>
            <person name="Munson R.S. Jr."/>
            <person name="Ray W.C."/>
            <person name="Mahairas G."/>
            <person name="Sabo P."/>
            <person name="Mungur R."/>
            <person name="Johnson L."/>
            <person name="Nguyen D."/>
            <person name="Wang J."/>
            <person name="Forst C."/>
            <person name="Hood L."/>
        </authorList>
    </citation>
    <scope>NUCLEOTIDE SEQUENCE [LARGE SCALE GENOMIC DNA]</scope>
    <source>
        <strain>35000HP / ATCC 700724</strain>
    </source>
</reference>
<protein>
    <recommendedName>
        <fullName evidence="1">tRNA-dihydrouridine(20/20a) synthase</fullName>
        <ecNumber evidence="1">1.3.1.-</ecNumber>
        <ecNumber evidence="1">1.3.1.91</ecNumber>
    </recommendedName>
    <alternativeName>
        <fullName evidence="1">U20-specific dihydrouridine synthase</fullName>
        <shortName evidence="1">U20-specific Dus</shortName>
    </alternativeName>
    <alternativeName>
        <fullName evidence="1">tRNA-dihydrouridine synthase A</fullName>
    </alternativeName>
</protein>
<keyword id="KW-0285">Flavoprotein</keyword>
<keyword id="KW-0288">FMN</keyword>
<keyword id="KW-0521">NADP</keyword>
<keyword id="KW-0560">Oxidoreductase</keyword>
<keyword id="KW-1185">Reference proteome</keyword>
<keyword id="KW-0694">RNA-binding</keyword>
<keyword id="KW-0819">tRNA processing</keyword>
<keyword id="KW-0820">tRNA-binding</keyword>
<feature type="chain" id="PRO_0000162066" description="tRNA-dihydrouridine(20/20a) synthase">
    <location>
        <begin position="1"/>
        <end position="323"/>
    </location>
</feature>
<feature type="active site" description="Proton donor" evidence="1">
    <location>
        <position position="96"/>
    </location>
</feature>
<feature type="binding site" evidence="1">
    <location>
        <begin position="14"/>
        <end position="16"/>
    </location>
    <ligand>
        <name>FMN</name>
        <dbReference type="ChEBI" id="CHEBI:58210"/>
    </ligand>
</feature>
<feature type="binding site" evidence="1">
    <location>
        <position position="66"/>
    </location>
    <ligand>
        <name>FMN</name>
        <dbReference type="ChEBI" id="CHEBI:58210"/>
    </ligand>
</feature>
<feature type="binding site" evidence="1">
    <location>
        <position position="135"/>
    </location>
    <ligand>
        <name>FMN</name>
        <dbReference type="ChEBI" id="CHEBI:58210"/>
    </ligand>
</feature>
<feature type="binding site" evidence="1">
    <location>
        <position position="166"/>
    </location>
    <ligand>
        <name>FMN</name>
        <dbReference type="ChEBI" id="CHEBI:58210"/>
    </ligand>
</feature>
<feature type="binding site" evidence="1">
    <location>
        <begin position="206"/>
        <end position="208"/>
    </location>
    <ligand>
        <name>FMN</name>
        <dbReference type="ChEBI" id="CHEBI:58210"/>
    </ligand>
</feature>
<feature type="binding site" evidence="1">
    <location>
        <begin position="228"/>
        <end position="229"/>
    </location>
    <ligand>
        <name>FMN</name>
        <dbReference type="ChEBI" id="CHEBI:58210"/>
    </ligand>
</feature>
<feature type="site" description="Interacts with tRNA" evidence="1">
    <location>
        <position position="93"/>
    </location>
</feature>
<feature type="site" description="Interacts with tRNA; defines subfamily-specific binding signature" evidence="1">
    <location>
        <position position="178"/>
    </location>
</feature>
<feature type="site" description="Interacts with tRNA" evidence="1">
    <location>
        <position position="181"/>
    </location>
</feature>
<feature type="site" description="Interacts with tRNA; defines subfamily-specific binding signature" evidence="1">
    <location>
        <position position="294"/>
    </location>
</feature>
<feature type="site" description="Interacts with tRNA; defines subfamily-specific binding signature" evidence="1">
    <location>
        <position position="297"/>
    </location>
</feature>